<proteinExistence type="inferred from homology"/>
<gene>
    <name evidence="1" type="primary">queA</name>
    <name type="ordered locus">Rru_A0281</name>
</gene>
<keyword id="KW-0963">Cytoplasm</keyword>
<keyword id="KW-0671">Queuosine biosynthesis</keyword>
<keyword id="KW-1185">Reference proteome</keyword>
<keyword id="KW-0949">S-adenosyl-L-methionine</keyword>
<keyword id="KW-0808">Transferase</keyword>
<accession>Q2RXQ9</accession>
<feature type="chain" id="PRO_0000231366" description="S-adenosylmethionine:tRNA ribosyltransferase-isomerase">
    <location>
        <begin position="1"/>
        <end position="345"/>
    </location>
</feature>
<reference key="1">
    <citation type="journal article" date="2011" name="Stand. Genomic Sci.">
        <title>Complete genome sequence of Rhodospirillum rubrum type strain (S1).</title>
        <authorList>
            <person name="Munk A.C."/>
            <person name="Copeland A."/>
            <person name="Lucas S."/>
            <person name="Lapidus A."/>
            <person name="Del Rio T.G."/>
            <person name="Barry K."/>
            <person name="Detter J.C."/>
            <person name="Hammon N."/>
            <person name="Israni S."/>
            <person name="Pitluck S."/>
            <person name="Brettin T."/>
            <person name="Bruce D."/>
            <person name="Han C."/>
            <person name="Tapia R."/>
            <person name="Gilna P."/>
            <person name="Schmutz J."/>
            <person name="Larimer F."/>
            <person name="Land M."/>
            <person name="Kyrpides N.C."/>
            <person name="Mavromatis K."/>
            <person name="Richardson P."/>
            <person name="Rohde M."/>
            <person name="Goeker M."/>
            <person name="Klenk H.P."/>
            <person name="Zhang Y."/>
            <person name="Roberts G.P."/>
            <person name="Reslewic S."/>
            <person name="Schwartz D.C."/>
        </authorList>
    </citation>
    <scope>NUCLEOTIDE SEQUENCE [LARGE SCALE GENOMIC DNA]</scope>
    <source>
        <strain>ATCC 11170 / ATH 1.1.1 / DSM 467 / LMG 4362 / NCIMB 8255 / S1</strain>
    </source>
</reference>
<comment type="function">
    <text evidence="1">Transfers and isomerizes the ribose moiety from AdoMet to the 7-aminomethyl group of 7-deazaguanine (preQ1-tRNA) to give epoxyqueuosine (oQ-tRNA).</text>
</comment>
<comment type="catalytic activity">
    <reaction evidence="1">
        <text>7-aminomethyl-7-carbaguanosine(34) in tRNA + S-adenosyl-L-methionine = epoxyqueuosine(34) in tRNA + adenine + L-methionine + 2 H(+)</text>
        <dbReference type="Rhea" id="RHEA:32155"/>
        <dbReference type="Rhea" id="RHEA-COMP:10342"/>
        <dbReference type="Rhea" id="RHEA-COMP:18582"/>
        <dbReference type="ChEBI" id="CHEBI:15378"/>
        <dbReference type="ChEBI" id="CHEBI:16708"/>
        <dbReference type="ChEBI" id="CHEBI:57844"/>
        <dbReference type="ChEBI" id="CHEBI:59789"/>
        <dbReference type="ChEBI" id="CHEBI:82833"/>
        <dbReference type="ChEBI" id="CHEBI:194443"/>
        <dbReference type="EC" id="2.4.99.17"/>
    </reaction>
</comment>
<comment type="pathway">
    <text evidence="1">tRNA modification; tRNA-queuosine biosynthesis.</text>
</comment>
<comment type="subunit">
    <text evidence="1">Monomer.</text>
</comment>
<comment type="subcellular location">
    <subcellularLocation>
        <location evidence="1">Cytoplasm</location>
    </subcellularLocation>
</comment>
<comment type="similarity">
    <text evidence="1">Belongs to the QueA family.</text>
</comment>
<evidence type="ECO:0000255" key="1">
    <source>
        <dbReference type="HAMAP-Rule" id="MF_00113"/>
    </source>
</evidence>
<protein>
    <recommendedName>
        <fullName evidence="1">S-adenosylmethionine:tRNA ribosyltransferase-isomerase</fullName>
        <ecNumber evidence="1">2.4.99.17</ecNumber>
    </recommendedName>
    <alternativeName>
        <fullName evidence="1">Queuosine biosynthesis protein QueA</fullName>
    </alternativeName>
</protein>
<organism>
    <name type="scientific">Rhodospirillum rubrum (strain ATCC 11170 / ATH 1.1.1 / DSM 467 / LMG 4362 / NCIMB 8255 / S1)</name>
    <dbReference type="NCBI Taxonomy" id="269796"/>
    <lineage>
        <taxon>Bacteria</taxon>
        <taxon>Pseudomonadati</taxon>
        <taxon>Pseudomonadota</taxon>
        <taxon>Alphaproteobacteria</taxon>
        <taxon>Rhodospirillales</taxon>
        <taxon>Rhodospirillaceae</taxon>
        <taxon>Rhodospirillum</taxon>
    </lineage>
</organism>
<sequence length="345" mass="37205">MRVDLFDFDLPRDLIAVRPAVPRDSARLLLVEGESRRDLGVGDLPGLLDPGDILVFNDTRVIPARLKGRIGDGGVEVTLHKRVGPDAWDCFARPARKLKPGVVILFAEGFTATVAARGEDGEATLRFDRAGAALMAALEAYGHIPLPPYIKRPDDARDRADYQTIYAREDGAVAAPTAGLHFTPALLAALEARGVSRAMVTLHVGAGTFLPVKVEDTDDHRMHAETGTLTAQTAEAINAARAAGGKVVAVGTTAMRLLESATGADKVIRPFHGDTSIFITPGYRFNAVDRLMTNFHLPRSTLFMLVSAFAGASRMRNAYAHAISQGYRFYSYGDSSLLSHAEDPR</sequence>
<name>QUEA_RHORT</name>
<dbReference type="EC" id="2.4.99.17" evidence="1"/>
<dbReference type="EMBL" id="CP000230">
    <property type="protein sequence ID" value="ABC21086.1"/>
    <property type="molecule type" value="Genomic_DNA"/>
</dbReference>
<dbReference type="RefSeq" id="WP_011388034.1">
    <property type="nucleotide sequence ID" value="NC_007643.1"/>
</dbReference>
<dbReference type="RefSeq" id="YP_425373.1">
    <property type="nucleotide sequence ID" value="NC_007643.1"/>
</dbReference>
<dbReference type="SMR" id="Q2RXQ9"/>
<dbReference type="STRING" id="269796.Rru_A0281"/>
<dbReference type="EnsemblBacteria" id="ABC21086">
    <property type="protein sequence ID" value="ABC21086"/>
    <property type="gene ID" value="Rru_A0281"/>
</dbReference>
<dbReference type="KEGG" id="rru:Rru_A0281"/>
<dbReference type="PATRIC" id="fig|269796.9.peg.336"/>
<dbReference type="eggNOG" id="COG0809">
    <property type="taxonomic scope" value="Bacteria"/>
</dbReference>
<dbReference type="HOGENOM" id="CLU_039110_1_0_5"/>
<dbReference type="PhylomeDB" id="Q2RXQ9"/>
<dbReference type="UniPathway" id="UPA00392"/>
<dbReference type="Proteomes" id="UP000001929">
    <property type="component" value="Chromosome"/>
</dbReference>
<dbReference type="GO" id="GO:0005737">
    <property type="term" value="C:cytoplasm"/>
    <property type="evidence" value="ECO:0007669"/>
    <property type="project" value="UniProtKB-SubCell"/>
</dbReference>
<dbReference type="GO" id="GO:0051075">
    <property type="term" value="F:S-adenosylmethionine:tRNA ribosyltransferase-isomerase activity"/>
    <property type="evidence" value="ECO:0007669"/>
    <property type="project" value="UniProtKB-EC"/>
</dbReference>
<dbReference type="GO" id="GO:0008616">
    <property type="term" value="P:queuosine biosynthetic process"/>
    <property type="evidence" value="ECO:0007669"/>
    <property type="project" value="UniProtKB-UniRule"/>
</dbReference>
<dbReference type="GO" id="GO:0002099">
    <property type="term" value="P:tRNA wobble guanine modification"/>
    <property type="evidence" value="ECO:0007669"/>
    <property type="project" value="TreeGrafter"/>
</dbReference>
<dbReference type="FunFam" id="3.40.1780.10:FF:000001">
    <property type="entry name" value="S-adenosylmethionine:tRNA ribosyltransferase-isomerase"/>
    <property type="match status" value="1"/>
</dbReference>
<dbReference type="Gene3D" id="2.40.10.240">
    <property type="entry name" value="QueA-like"/>
    <property type="match status" value="1"/>
</dbReference>
<dbReference type="Gene3D" id="3.40.1780.10">
    <property type="entry name" value="QueA-like"/>
    <property type="match status" value="1"/>
</dbReference>
<dbReference type="HAMAP" id="MF_00113">
    <property type="entry name" value="QueA"/>
    <property type="match status" value="1"/>
</dbReference>
<dbReference type="InterPro" id="IPR003699">
    <property type="entry name" value="QueA"/>
</dbReference>
<dbReference type="InterPro" id="IPR042118">
    <property type="entry name" value="QueA_dom1"/>
</dbReference>
<dbReference type="InterPro" id="IPR042119">
    <property type="entry name" value="QueA_dom2"/>
</dbReference>
<dbReference type="InterPro" id="IPR036100">
    <property type="entry name" value="QueA_sf"/>
</dbReference>
<dbReference type="NCBIfam" id="NF001140">
    <property type="entry name" value="PRK00147.1"/>
    <property type="match status" value="1"/>
</dbReference>
<dbReference type="NCBIfam" id="TIGR00113">
    <property type="entry name" value="queA"/>
    <property type="match status" value="1"/>
</dbReference>
<dbReference type="PANTHER" id="PTHR30307">
    <property type="entry name" value="S-ADENOSYLMETHIONINE:TRNA RIBOSYLTRANSFERASE-ISOMERASE"/>
    <property type="match status" value="1"/>
</dbReference>
<dbReference type="PANTHER" id="PTHR30307:SF0">
    <property type="entry name" value="S-ADENOSYLMETHIONINE:TRNA RIBOSYLTRANSFERASE-ISOMERASE"/>
    <property type="match status" value="1"/>
</dbReference>
<dbReference type="Pfam" id="PF02547">
    <property type="entry name" value="Queuosine_synth"/>
    <property type="match status" value="1"/>
</dbReference>
<dbReference type="SUPFAM" id="SSF111337">
    <property type="entry name" value="QueA-like"/>
    <property type="match status" value="1"/>
</dbReference>